<name>CBAA_COMTE</name>
<organism>
    <name type="scientific">Comamonas testosteroni</name>
    <name type="common">Pseudomonas testosteroni</name>
    <dbReference type="NCBI Taxonomy" id="285"/>
    <lineage>
        <taxon>Bacteria</taxon>
        <taxon>Pseudomonadati</taxon>
        <taxon>Pseudomonadota</taxon>
        <taxon>Betaproteobacteria</taxon>
        <taxon>Burkholderiales</taxon>
        <taxon>Comamonadaceae</taxon>
        <taxon>Comamonas</taxon>
    </lineage>
</organism>
<evidence type="ECO:0000250" key="1"/>
<evidence type="ECO:0000255" key="2">
    <source>
        <dbReference type="PROSITE-ProRule" id="PRU00628"/>
    </source>
</evidence>
<evidence type="ECO:0000305" key="3"/>
<gene>
    <name type="primary">cbaA</name>
</gene>
<accession>Q44256</accession>
<accession>O08105</accession>
<protein>
    <recommendedName>
        <fullName>3-chlorobenzoate-3,4-dioxygenase oxygenase subunit</fullName>
        <ecNumber>1.14.-.-</ecNumber>
    </recommendedName>
</protein>
<comment type="cofactor">
    <cofactor evidence="3">
        <name>[2Fe-2S] cluster</name>
        <dbReference type="ChEBI" id="CHEBI:190135"/>
    </cofactor>
    <text evidence="3">Binds 1 [2Fe-2S] cluster.</text>
</comment>
<comment type="cofactor">
    <cofactor evidence="3">
        <name>Fe cation</name>
        <dbReference type="ChEBI" id="CHEBI:24875"/>
    </cofactor>
    <text evidence="3">Binds 1 Fe cation.</text>
</comment>
<comment type="subunit">
    <text>This dioxygenase system consists of two proteins: an oxygenase and an oxygenase reductase.</text>
</comment>
<comment type="similarity">
    <text evidence="3">Belongs to the bacterial ring-hydroxylating dioxygenase alpha subunit family.</text>
</comment>
<feature type="chain" id="PRO_0000085050" description="3-chlorobenzoate-3,4-dioxygenase oxygenase subunit">
    <location>
        <begin position="1"/>
        <end position="432"/>
    </location>
</feature>
<feature type="domain" description="Rieske" evidence="2">
    <location>
        <begin position="27"/>
        <end position="133"/>
    </location>
</feature>
<feature type="binding site" evidence="2">
    <location>
        <position position="69"/>
    </location>
    <ligand>
        <name>[2Fe-2S] cluster</name>
        <dbReference type="ChEBI" id="CHEBI:190135"/>
    </ligand>
</feature>
<feature type="binding site" evidence="2">
    <location>
        <position position="71"/>
    </location>
    <ligand>
        <name>[2Fe-2S] cluster</name>
        <dbReference type="ChEBI" id="CHEBI:190135"/>
    </ligand>
</feature>
<feature type="binding site" evidence="2">
    <location>
        <position position="88"/>
    </location>
    <ligand>
        <name>[2Fe-2S] cluster</name>
        <dbReference type="ChEBI" id="CHEBI:190135"/>
    </ligand>
</feature>
<feature type="binding site" evidence="2">
    <location>
        <position position="91"/>
    </location>
    <ligand>
        <name>[2Fe-2S] cluster</name>
        <dbReference type="ChEBI" id="CHEBI:190135"/>
    </ligand>
</feature>
<feature type="binding site" evidence="1">
    <location>
        <position position="180"/>
    </location>
    <ligand>
        <name>Fe cation</name>
        <dbReference type="ChEBI" id="CHEBI:24875"/>
    </ligand>
</feature>
<feature type="binding site" evidence="1">
    <location>
        <position position="185"/>
    </location>
    <ligand>
        <name>Fe cation</name>
        <dbReference type="ChEBI" id="CHEBI:24875"/>
    </ligand>
</feature>
<proteinExistence type="inferred from homology"/>
<dbReference type="EC" id="1.14.-.-"/>
<dbReference type="EMBL" id="U18133">
    <property type="protein sequence ID" value="AAC45716.1"/>
    <property type="molecule type" value="Genomic_DNA"/>
</dbReference>
<dbReference type="SMR" id="Q44256"/>
<dbReference type="BioCyc" id="MetaCyc:MONOMER-14756"/>
<dbReference type="GO" id="GO:0051537">
    <property type="term" value="F:2 iron, 2 sulfur cluster binding"/>
    <property type="evidence" value="ECO:0007669"/>
    <property type="project" value="UniProtKB-KW"/>
</dbReference>
<dbReference type="GO" id="GO:0051213">
    <property type="term" value="F:dioxygenase activity"/>
    <property type="evidence" value="ECO:0007669"/>
    <property type="project" value="UniProtKB-KW"/>
</dbReference>
<dbReference type="GO" id="GO:0005506">
    <property type="term" value="F:iron ion binding"/>
    <property type="evidence" value="ECO:0007669"/>
    <property type="project" value="InterPro"/>
</dbReference>
<dbReference type="GO" id="GO:0009056">
    <property type="term" value="P:catabolic process"/>
    <property type="evidence" value="ECO:0007669"/>
    <property type="project" value="UniProtKB-KW"/>
</dbReference>
<dbReference type="CDD" id="cd03479">
    <property type="entry name" value="Rieske_RO_Alpha_PhDO_like"/>
    <property type="match status" value="1"/>
</dbReference>
<dbReference type="Gene3D" id="3.90.380.10">
    <property type="entry name" value="Naphthalene 1,2-dioxygenase Alpha Subunit, Chain A, domain 1"/>
    <property type="match status" value="1"/>
</dbReference>
<dbReference type="Gene3D" id="2.102.10.10">
    <property type="entry name" value="Rieske [2Fe-2S] iron-sulphur domain"/>
    <property type="match status" value="1"/>
</dbReference>
<dbReference type="InterPro" id="IPR050584">
    <property type="entry name" value="Cholesterol_7-desaturase"/>
</dbReference>
<dbReference type="InterPro" id="IPR045623">
    <property type="entry name" value="LigXa_C"/>
</dbReference>
<dbReference type="InterPro" id="IPR017941">
    <property type="entry name" value="Rieske_2Fe-2S"/>
</dbReference>
<dbReference type="InterPro" id="IPR036922">
    <property type="entry name" value="Rieske_2Fe-2S_sf"/>
</dbReference>
<dbReference type="InterPro" id="IPR015881">
    <property type="entry name" value="Ring-hydroxy_dOase_2Fe2S_BS"/>
</dbReference>
<dbReference type="PANTHER" id="PTHR21266:SF59">
    <property type="entry name" value="BLR4922 PROTEIN"/>
    <property type="match status" value="1"/>
</dbReference>
<dbReference type="PANTHER" id="PTHR21266">
    <property type="entry name" value="IRON-SULFUR DOMAIN CONTAINING PROTEIN"/>
    <property type="match status" value="1"/>
</dbReference>
<dbReference type="Pfam" id="PF19301">
    <property type="entry name" value="LigXa_C"/>
    <property type="match status" value="1"/>
</dbReference>
<dbReference type="Pfam" id="PF00355">
    <property type="entry name" value="Rieske"/>
    <property type="match status" value="1"/>
</dbReference>
<dbReference type="SUPFAM" id="SSF55961">
    <property type="entry name" value="Bet v1-like"/>
    <property type="match status" value="1"/>
</dbReference>
<dbReference type="SUPFAM" id="SSF50022">
    <property type="entry name" value="ISP domain"/>
    <property type="match status" value="1"/>
</dbReference>
<dbReference type="PROSITE" id="PS51296">
    <property type="entry name" value="RIESKE"/>
    <property type="match status" value="1"/>
</dbReference>
<dbReference type="PROSITE" id="PS00570">
    <property type="entry name" value="RING_HYDROXYL_ALPHA"/>
    <property type="match status" value="1"/>
</dbReference>
<reference key="1">
    <citation type="journal article" date="1995" name="Microbiology">
        <title>The nucleotide sequence of the Tn5271 3-chlorobenzoate 3,4-dioxygenase genes (cbaAB) unites the class IA oxygenases in a single lineage.</title>
        <authorList>
            <person name="Nakatsu C.H."/>
            <person name="Straus N.A."/>
            <person name="Wyndham R.C."/>
        </authorList>
    </citation>
    <scope>NUCLEOTIDE SEQUENCE [GENOMIC DNA]</scope>
    <source>
        <strain>BR60 / Isolate Bloody Run creek</strain>
        <transposon>Tn5271</transposon>
    </source>
</reference>
<keyword id="KW-0001">2Fe-2S</keyword>
<keyword id="KW-0058">Aromatic hydrocarbons catabolism</keyword>
<keyword id="KW-0223">Dioxygenase</keyword>
<keyword id="KW-0408">Iron</keyword>
<keyword id="KW-0411">Iron-sulfur</keyword>
<keyword id="KW-0479">Metal-binding</keyword>
<keyword id="KW-0520">NAD</keyword>
<keyword id="KW-0560">Oxidoreductase</keyword>
<sequence length="432" mass="48927">MALTKDNEDLVRVGRGTPMGGLMREYWIPALKSTELEAGGSPVRLLLLGEKLVAFREPSGAVGVMDSRCPHRGVSLFMGRVEEGGLRCVYHGWKFSAEGKCVDMPSVRPEDEFKNSVRVARYPVKEMAGVVWVYMGTRKVLPELPRLEVLNLPENEVDVICLQRKSNWLQNLEGEIDTSHFNFLHVGGLHADEVPDDHPLKYTAQVAPQYLVKETALGTCYAAQVPAEEDHTYTRFAHFLFPFWALIPQADIAQNILARAWVPMDDEHTMMFFFRWTGSKAKRLDTPLKSGSPMPGVTLTDMKYKENTTDWYGRWQPLGDESNDWLIDRDLQKVGRVFSGIYGIHAQDQAMTDSMGPIIDHGLEQLAPTDLMIVRTRRRILKALRAHEANGTLPPGVDEADQYFTPRSGYYLTPKSVDWETAYEQRIEGLVR</sequence>